<reference key="1">
    <citation type="journal article" date="2005" name="Nucleic Acids Res.">
        <title>Genome dynamics and diversity of Shigella species, the etiologic agents of bacillary dysentery.</title>
        <authorList>
            <person name="Yang F."/>
            <person name="Yang J."/>
            <person name="Zhang X."/>
            <person name="Chen L."/>
            <person name="Jiang Y."/>
            <person name="Yan Y."/>
            <person name="Tang X."/>
            <person name="Wang J."/>
            <person name="Xiong Z."/>
            <person name="Dong J."/>
            <person name="Xue Y."/>
            <person name="Zhu Y."/>
            <person name="Xu X."/>
            <person name="Sun L."/>
            <person name="Chen S."/>
            <person name="Nie H."/>
            <person name="Peng J."/>
            <person name="Xu J."/>
            <person name="Wang Y."/>
            <person name="Yuan Z."/>
            <person name="Wen Y."/>
            <person name="Yao Z."/>
            <person name="Shen Y."/>
            <person name="Qiang B."/>
            <person name="Hou Y."/>
            <person name="Yu J."/>
            <person name="Jin Q."/>
        </authorList>
    </citation>
    <scope>NUCLEOTIDE SEQUENCE [LARGE SCALE GENOMIC DNA]</scope>
    <source>
        <strain>Sd197</strain>
    </source>
</reference>
<protein>
    <recommendedName>
        <fullName evidence="1">Flap endonuclease Xni</fullName>
        <shortName evidence="1">FEN</shortName>
        <ecNumber evidence="1">3.1.-.-</ecNumber>
    </recommendedName>
</protein>
<organism>
    <name type="scientific">Shigella dysenteriae serotype 1 (strain Sd197)</name>
    <dbReference type="NCBI Taxonomy" id="300267"/>
    <lineage>
        <taxon>Bacteria</taxon>
        <taxon>Pseudomonadati</taxon>
        <taxon>Pseudomonadota</taxon>
        <taxon>Gammaproteobacteria</taxon>
        <taxon>Enterobacterales</taxon>
        <taxon>Enterobacteriaceae</taxon>
        <taxon>Shigella</taxon>
    </lineage>
</organism>
<keyword id="KW-0238">DNA-binding</keyword>
<keyword id="KW-0255">Endonuclease</keyword>
<keyword id="KW-0378">Hydrolase</keyword>
<keyword id="KW-0460">Magnesium</keyword>
<keyword id="KW-0479">Metal-binding</keyword>
<keyword id="KW-0540">Nuclease</keyword>
<keyword id="KW-0630">Potassium</keyword>
<keyword id="KW-1185">Reference proteome</keyword>
<dbReference type="EC" id="3.1.-.-" evidence="1"/>
<dbReference type="EMBL" id="CP000034">
    <property type="protein sequence ID" value="ABB63035.1"/>
    <property type="status" value="ALT_INIT"/>
    <property type="molecule type" value="Genomic_DNA"/>
</dbReference>
<dbReference type="RefSeq" id="WP_000268232.1">
    <property type="nucleotide sequence ID" value="NC_007606.1"/>
</dbReference>
<dbReference type="RefSeq" id="YP_404526.1">
    <property type="nucleotide sequence ID" value="NC_007606.1"/>
</dbReference>
<dbReference type="SMR" id="Q32CC0"/>
<dbReference type="STRING" id="300267.SDY_3015"/>
<dbReference type="EnsemblBacteria" id="ABB63035">
    <property type="protein sequence ID" value="ABB63035"/>
    <property type="gene ID" value="SDY_3015"/>
</dbReference>
<dbReference type="GeneID" id="93779200"/>
<dbReference type="KEGG" id="sdy:SDY_3015"/>
<dbReference type="PATRIC" id="fig|300267.13.peg.3619"/>
<dbReference type="HOGENOM" id="CLU_004675_1_2_6"/>
<dbReference type="Proteomes" id="UP000002716">
    <property type="component" value="Chromosome"/>
</dbReference>
<dbReference type="GO" id="GO:0008409">
    <property type="term" value="F:5'-3' exonuclease activity"/>
    <property type="evidence" value="ECO:0007669"/>
    <property type="project" value="InterPro"/>
</dbReference>
<dbReference type="GO" id="GO:0017108">
    <property type="term" value="F:5'-flap endonuclease activity"/>
    <property type="evidence" value="ECO:0007669"/>
    <property type="project" value="UniProtKB-UniRule"/>
</dbReference>
<dbReference type="GO" id="GO:0003677">
    <property type="term" value="F:DNA binding"/>
    <property type="evidence" value="ECO:0007669"/>
    <property type="project" value="UniProtKB-UniRule"/>
</dbReference>
<dbReference type="GO" id="GO:0000287">
    <property type="term" value="F:magnesium ion binding"/>
    <property type="evidence" value="ECO:0007669"/>
    <property type="project" value="UniProtKB-UniRule"/>
</dbReference>
<dbReference type="GO" id="GO:0030955">
    <property type="term" value="F:potassium ion binding"/>
    <property type="evidence" value="ECO:0007669"/>
    <property type="project" value="UniProtKB-UniRule"/>
</dbReference>
<dbReference type="GO" id="GO:0033567">
    <property type="term" value="P:DNA replication, Okazaki fragment processing"/>
    <property type="evidence" value="ECO:0007669"/>
    <property type="project" value="UniProtKB-UniRule"/>
</dbReference>
<dbReference type="CDD" id="cd09898">
    <property type="entry name" value="H3TH_53EXO"/>
    <property type="match status" value="1"/>
</dbReference>
<dbReference type="CDD" id="cd09859">
    <property type="entry name" value="PIN_53EXO"/>
    <property type="match status" value="1"/>
</dbReference>
<dbReference type="FunFam" id="1.10.150.20:FF:000003">
    <property type="entry name" value="DNA polymerase I"/>
    <property type="match status" value="1"/>
</dbReference>
<dbReference type="FunFam" id="3.40.50.1010:FF:000011">
    <property type="entry name" value="Flap endonuclease Xni"/>
    <property type="match status" value="1"/>
</dbReference>
<dbReference type="Gene3D" id="1.10.150.20">
    <property type="entry name" value="5' to 3' exonuclease, C-terminal subdomain"/>
    <property type="match status" value="1"/>
</dbReference>
<dbReference type="Gene3D" id="3.40.50.1010">
    <property type="entry name" value="5'-nuclease"/>
    <property type="match status" value="1"/>
</dbReference>
<dbReference type="HAMAP" id="MF_01192">
    <property type="entry name" value="Xni"/>
    <property type="match status" value="1"/>
</dbReference>
<dbReference type="InterPro" id="IPR020046">
    <property type="entry name" value="5-3_exonucl_a-hlix_arch_N"/>
</dbReference>
<dbReference type="InterPro" id="IPR002421">
    <property type="entry name" value="5-3_exonuclease"/>
</dbReference>
<dbReference type="InterPro" id="IPR036279">
    <property type="entry name" value="5-3_exonuclease_C_sf"/>
</dbReference>
<dbReference type="InterPro" id="IPR020045">
    <property type="entry name" value="DNA_polI_H3TH"/>
</dbReference>
<dbReference type="InterPro" id="IPR038969">
    <property type="entry name" value="FEN"/>
</dbReference>
<dbReference type="InterPro" id="IPR008918">
    <property type="entry name" value="HhH2"/>
</dbReference>
<dbReference type="InterPro" id="IPR029060">
    <property type="entry name" value="PIN-like_dom_sf"/>
</dbReference>
<dbReference type="InterPro" id="IPR022895">
    <property type="entry name" value="Xni"/>
</dbReference>
<dbReference type="NCBIfam" id="NF007017">
    <property type="entry name" value="PRK09482.1"/>
    <property type="match status" value="1"/>
</dbReference>
<dbReference type="PANTHER" id="PTHR42646:SF2">
    <property type="entry name" value="5'-3' EXONUCLEASE FAMILY PROTEIN"/>
    <property type="match status" value="1"/>
</dbReference>
<dbReference type="PANTHER" id="PTHR42646">
    <property type="entry name" value="FLAP ENDONUCLEASE XNI"/>
    <property type="match status" value="1"/>
</dbReference>
<dbReference type="Pfam" id="PF01367">
    <property type="entry name" value="5_3_exonuc"/>
    <property type="match status" value="1"/>
</dbReference>
<dbReference type="Pfam" id="PF02739">
    <property type="entry name" value="5_3_exonuc_N"/>
    <property type="match status" value="1"/>
</dbReference>
<dbReference type="SMART" id="SM00475">
    <property type="entry name" value="53EXOc"/>
    <property type="match status" value="1"/>
</dbReference>
<dbReference type="SMART" id="SM00279">
    <property type="entry name" value="HhH2"/>
    <property type="match status" value="1"/>
</dbReference>
<dbReference type="SUPFAM" id="SSF47807">
    <property type="entry name" value="5' to 3' exonuclease, C-terminal subdomain"/>
    <property type="match status" value="1"/>
</dbReference>
<dbReference type="SUPFAM" id="SSF88723">
    <property type="entry name" value="PIN domain-like"/>
    <property type="match status" value="1"/>
</dbReference>
<gene>
    <name evidence="1" type="primary">xni</name>
    <name evidence="1" type="synonym">ygdG</name>
    <name type="ordered locus">SDY_3015</name>
</gene>
<feature type="chain" id="PRO_0000297883" description="Flap endonuclease Xni">
    <location>
        <begin position="1"/>
        <end position="251"/>
    </location>
</feature>
<feature type="domain" description="5'-3' exonuclease" evidence="1">
    <location>
        <begin position="160"/>
        <end position="249"/>
    </location>
</feature>
<feature type="region of interest" description="Interaction with DNA" evidence="1">
    <location>
        <begin position="184"/>
        <end position="189"/>
    </location>
</feature>
<feature type="binding site" evidence="1">
    <location>
        <position position="104"/>
    </location>
    <ligand>
        <name>Mg(2+)</name>
        <dbReference type="ChEBI" id="CHEBI:18420"/>
    </ligand>
</feature>
<feature type="binding site" evidence="1">
    <location>
        <position position="171"/>
    </location>
    <ligand>
        <name>K(+)</name>
        <dbReference type="ChEBI" id="CHEBI:29103"/>
    </ligand>
</feature>
<feature type="binding site" evidence="1">
    <location>
        <position position="172"/>
    </location>
    <ligand>
        <name>K(+)</name>
        <dbReference type="ChEBI" id="CHEBI:29103"/>
    </ligand>
</feature>
<feature type="binding site" evidence="1">
    <location>
        <position position="180"/>
    </location>
    <ligand>
        <name>K(+)</name>
        <dbReference type="ChEBI" id="CHEBI:29103"/>
    </ligand>
</feature>
<feature type="binding site" evidence="1">
    <location>
        <position position="182"/>
    </location>
    <ligand>
        <name>K(+)</name>
        <dbReference type="ChEBI" id="CHEBI:29103"/>
    </ligand>
</feature>
<feature type="binding site" evidence="1">
    <location>
        <position position="185"/>
    </location>
    <ligand>
        <name>K(+)</name>
        <dbReference type="ChEBI" id="CHEBI:29103"/>
    </ligand>
</feature>
<sequence>MAVHLLIVDALNLIRRIHAVQGSPCVETCQHALDQLIMHSQPTHAVAVFDDENRSSGWRHQRLPDYKAGRPPMPEELHDEMPALRAAFEQRGVPCWSTSGNEADDLAATLAVKVTQAGHQATIVSTDKGYCQLLSPTLRIRDYFQKRWLDAPFIDKEFGVQPQQLPDYWGLAGISSSKVPGVAGIGPKSATQLLVEFQSLEGIYENLDAVAEKWRKKLETHKEMAFLCRDIARLQTDLHIDGNLQQLRLVR</sequence>
<evidence type="ECO:0000255" key="1">
    <source>
        <dbReference type="HAMAP-Rule" id="MF_01192"/>
    </source>
</evidence>
<evidence type="ECO:0000305" key="2"/>
<accession>Q32CC0</accession>
<name>XNI_SHIDS</name>
<proteinExistence type="inferred from homology"/>
<comment type="function">
    <text evidence="1">Has flap endonuclease activity. During DNA replication, flap endonucleases cleave the 5'-overhanging flap structure that is generated by displacement synthesis when DNA polymerase encounters the 5'-end of a downstream Okazaki fragment.</text>
</comment>
<comment type="cofactor">
    <cofactor evidence="1">
        <name>Mg(2+)</name>
        <dbReference type="ChEBI" id="CHEBI:18420"/>
    </cofactor>
    <text evidence="1">Binds 2 Mg(2+) per subunit. Only one magnesium ion has a direct interaction with the protein, the other interactions are indirect.</text>
</comment>
<comment type="cofactor">
    <cofactor evidence="1">
        <name>K(+)</name>
        <dbReference type="ChEBI" id="CHEBI:29103"/>
    </cofactor>
    <text evidence="1">Binds 1 K(+) per subunit. The potassium ion strongly increases the affinity for DNA.</text>
</comment>
<comment type="similarity">
    <text evidence="1">Belongs to the Xni family.</text>
</comment>
<comment type="sequence caution" evidence="2">
    <conflict type="erroneous initiation">
        <sequence resource="EMBL-CDS" id="ABB63035"/>
    </conflict>
    <text>Extended N-terminus.</text>
</comment>